<proteinExistence type="evidence at protein level"/>
<gene>
    <name type="primary">Irf9</name>
    <name type="synonym">Isgf3g</name>
</gene>
<organism>
    <name type="scientific">Mus musculus</name>
    <name type="common">Mouse</name>
    <dbReference type="NCBI Taxonomy" id="10090"/>
    <lineage>
        <taxon>Eukaryota</taxon>
        <taxon>Metazoa</taxon>
        <taxon>Chordata</taxon>
        <taxon>Craniata</taxon>
        <taxon>Vertebrata</taxon>
        <taxon>Euteleostomi</taxon>
        <taxon>Mammalia</taxon>
        <taxon>Eutheria</taxon>
        <taxon>Euarchontoglires</taxon>
        <taxon>Glires</taxon>
        <taxon>Rodentia</taxon>
        <taxon>Myomorpha</taxon>
        <taxon>Muroidea</taxon>
        <taxon>Muridae</taxon>
        <taxon>Murinae</taxon>
        <taxon>Mus</taxon>
        <taxon>Mus</taxon>
    </lineage>
</organism>
<feature type="chain" id="PRO_0000154568" description="Interferon regulatory factor 9">
    <location>
        <begin position="1"/>
        <end position="399"/>
    </location>
</feature>
<feature type="DNA-binding region" description="IRF tryptophan pentad repeat" evidence="2">
    <location>
        <begin position="9"/>
        <end position="116"/>
    </location>
</feature>
<feature type="region of interest" description="Disordered" evidence="3">
    <location>
        <begin position="118"/>
        <end position="189"/>
    </location>
</feature>
<feature type="compositionally biased region" description="Polar residues" evidence="3">
    <location>
        <begin position="120"/>
        <end position="129"/>
    </location>
</feature>
<feature type="compositionally biased region" description="Polar residues" evidence="3">
    <location>
        <begin position="148"/>
        <end position="157"/>
    </location>
</feature>
<feature type="compositionally biased region" description="Low complexity" evidence="3">
    <location>
        <begin position="171"/>
        <end position="189"/>
    </location>
</feature>
<feature type="modified residue" description="Phosphoserine" evidence="6">
    <location>
        <position position="139"/>
    </location>
</feature>
<feature type="modified residue" description="Phosphoserine" evidence="5">
    <location>
        <position position="393"/>
    </location>
</feature>
<feature type="strand" evidence="7">
    <location>
        <begin position="214"/>
        <end position="220"/>
    </location>
</feature>
<feature type="strand" evidence="7">
    <location>
        <begin position="223"/>
        <end position="230"/>
    </location>
</feature>
<feature type="strand" evidence="7">
    <location>
        <begin position="232"/>
        <end position="240"/>
    </location>
</feature>
<feature type="strand" evidence="7">
    <location>
        <begin position="247"/>
        <end position="252"/>
    </location>
</feature>
<feature type="helix" evidence="7">
    <location>
        <begin position="262"/>
        <end position="266"/>
    </location>
</feature>
<feature type="strand" evidence="7">
    <location>
        <begin position="273"/>
        <end position="278"/>
    </location>
</feature>
<feature type="strand" evidence="7">
    <location>
        <begin position="281"/>
        <end position="286"/>
    </location>
</feature>
<feature type="strand" evidence="7">
    <location>
        <begin position="288"/>
        <end position="290"/>
    </location>
</feature>
<feature type="strand" evidence="7">
    <location>
        <begin position="292"/>
        <end position="295"/>
    </location>
</feature>
<feature type="strand" evidence="7">
    <location>
        <begin position="301"/>
        <end position="304"/>
    </location>
</feature>
<feature type="strand" evidence="7">
    <location>
        <begin position="313"/>
        <end position="318"/>
    </location>
</feature>
<feature type="helix" evidence="7">
    <location>
        <begin position="319"/>
        <end position="330"/>
    </location>
</feature>
<feature type="strand" evidence="7">
    <location>
        <begin position="341"/>
        <end position="348"/>
    </location>
</feature>
<feature type="strand" evidence="7">
    <location>
        <begin position="352"/>
        <end position="366"/>
    </location>
</feature>
<feature type="helix" evidence="7">
    <location>
        <begin position="367"/>
        <end position="384"/>
    </location>
</feature>
<evidence type="ECO:0000250" key="1">
    <source>
        <dbReference type="UniProtKB" id="Q00978"/>
    </source>
</evidence>
<evidence type="ECO:0000255" key="2">
    <source>
        <dbReference type="PROSITE-ProRule" id="PRU00840"/>
    </source>
</evidence>
<evidence type="ECO:0000256" key="3">
    <source>
        <dbReference type="SAM" id="MobiDB-lite"/>
    </source>
</evidence>
<evidence type="ECO:0000269" key="4">
    <source>
    </source>
</evidence>
<evidence type="ECO:0007744" key="5">
    <source>
    </source>
</evidence>
<evidence type="ECO:0007744" key="6">
    <source>
    </source>
</evidence>
<evidence type="ECO:0007829" key="7">
    <source>
        <dbReference type="PDB" id="5OEM"/>
    </source>
</evidence>
<protein>
    <recommendedName>
        <fullName>Interferon regulatory factor 9</fullName>
        <shortName>IRF-9</shortName>
    </recommendedName>
    <alternativeName>
        <fullName>IFN-alpha-responsive transcription factor subunit</fullName>
    </alternativeName>
    <alternativeName>
        <fullName>ISGF3 p48 subunit</fullName>
    </alternativeName>
    <alternativeName>
        <fullName>Interferon-stimulated gene factor 3 gamma</fullName>
        <shortName>ISGF-3 gamma</shortName>
    </alternativeName>
    <alternativeName>
        <fullName>Transcriptional regulator ISGF3 subunit gamma</fullName>
    </alternativeName>
</protein>
<accession>Q61179</accession>
<keyword id="KW-0002">3D-structure</keyword>
<keyword id="KW-0010">Activator</keyword>
<keyword id="KW-0238">DNA-binding</keyword>
<keyword id="KW-0539">Nucleus</keyword>
<keyword id="KW-0597">Phosphoprotein</keyword>
<keyword id="KW-1185">Reference proteome</keyword>
<keyword id="KW-0804">Transcription</keyword>
<keyword id="KW-0805">Transcription regulation</keyword>
<name>IRF9_MOUSE</name>
<sequence length="399" mass="44610">MASGKVRCTRKLRSWIVEQVESGHFPGVCWDDAAKTMFRIPWKHAGKQDFREDQDAAIFKAWALFKEKHKDGDIGHPAVWKTRLRCALNKSSEFEEVPERGRMDVAEPYKVYRILPAGTLPNQPRNQKSPCKRSISCVSPEREENMENGRTNGVVNHSDSGSNIGGGGNGSNRSDSNSNCNSELEEGAGTTEATIREDPVFLEHQLPLNSDYSLLLTFIYGGRVVGKTQVHSLDCRLVAERSDSESSMEQVEFPKPDPLEPTQHLLNQLDRGVLVASNSRGLFVQRLCPIPISWNAPEAPPGPGPHLLPSNKCVELFKTTYFCRDLAQYFQGQGPPPKFQATLHFWEESPGSSHSQENLITVQMEQAFARHLLEKIPEEEKAALFLLQHTEQSPSALGH</sequence>
<reference key="1">
    <citation type="journal article" date="1996" name="J. Biochem.">
        <title>Structure of mouse interferon stimulated gene factor 3 gamma (ISGF3 gamma/p48) cDNA and chromosomal localization of the gene.</title>
        <authorList>
            <person name="Suhara W."/>
            <person name="Yoneyama M."/>
            <person name="Yonekawa H."/>
            <person name="Takashi F."/>
        </authorList>
    </citation>
    <scope>NUCLEOTIDE SEQUENCE [MRNA]</scope>
</reference>
<reference key="2">
    <citation type="journal article" date="2004" name="Genome Res.">
        <title>The status, quality, and expansion of the NIH full-length cDNA project: the Mammalian Gene Collection (MGC).</title>
        <authorList>
            <consortium name="The MGC Project Team"/>
        </authorList>
    </citation>
    <scope>NUCLEOTIDE SEQUENCE [LARGE SCALE MRNA]</scope>
    <source>
        <strain>FVB/N</strain>
        <tissue>Mammary gland</tissue>
    </source>
</reference>
<reference key="3">
    <citation type="journal article" date="1995" name="FEBS Lett.">
        <title>Possible involvement of the transcription factor ISGF3 gamma in virus-induced expression of the IFN-beta gene.</title>
        <authorList>
            <person name="Kawakami T."/>
            <person name="Matsumoto M."/>
            <person name="Sato M."/>
            <person name="Harada H."/>
            <person name="Taniguchi T."/>
            <person name="Kitagawa M."/>
        </authorList>
    </citation>
    <scope>NUCLEOTIDE SEQUENCE [MRNA] OF 1-87</scope>
</reference>
<reference key="4">
    <citation type="journal article" date="2007" name="Proc. Natl. Acad. Sci. U.S.A.">
        <title>Large-scale phosphorylation analysis of mouse liver.</title>
        <authorList>
            <person name="Villen J."/>
            <person name="Beausoleil S.A."/>
            <person name="Gerber S.A."/>
            <person name="Gygi S.P."/>
        </authorList>
    </citation>
    <scope>PHOSPHORYLATION [LARGE SCALE ANALYSIS] AT SER-393</scope>
    <scope>IDENTIFICATION BY MASS SPECTROMETRY [LARGE SCALE ANALYSIS]</scope>
    <source>
        <tissue>Liver</tissue>
    </source>
</reference>
<reference key="5">
    <citation type="journal article" date="2007" name="Science">
        <title>Multiple functions of the IKK-related kinase IKKepsilon in interferon-mediated antiviral immunity.</title>
        <authorList>
            <person name="Tenoever B.R."/>
            <person name="Ng S.L."/>
            <person name="Chua M.A."/>
            <person name="McWhirter S.M."/>
            <person name="Garcia-Sastre A."/>
            <person name="Maniatis T."/>
        </authorList>
    </citation>
    <scope>IDENTIFICATION IN THE ISGF3 COMPLEX</scope>
</reference>
<reference key="6">
    <citation type="journal article" date="2010" name="Cell">
        <title>A tissue-specific atlas of mouse protein phosphorylation and expression.</title>
        <authorList>
            <person name="Huttlin E.L."/>
            <person name="Jedrychowski M.P."/>
            <person name="Elias J.E."/>
            <person name="Goswami T."/>
            <person name="Rad R."/>
            <person name="Beausoleil S.A."/>
            <person name="Villen J."/>
            <person name="Haas W."/>
            <person name="Sowa M.E."/>
            <person name="Gygi S.P."/>
        </authorList>
    </citation>
    <scope>PHOSPHORYLATION [LARGE SCALE ANALYSIS] AT SER-139</scope>
    <scope>IDENTIFICATION BY MASS SPECTROMETRY [LARGE SCALE ANALYSIS]</scope>
    <source>
        <tissue>Spleen</tissue>
    </source>
</reference>
<comment type="function">
    <text evidence="1">Transcription factor that plays an essential role in anti-viral immunity. It mediates signaling by type I IFNs (IFN-alpha and IFN-beta). Following type I IFN binding to cell surface receptors, Jak kinases (TYK2 and JAK1) are activated, leading to tyrosine phosphorylation of STAT1 and STAT2. IRF9/ISGF3G associates with the phosphorylated STAT1:STAT2 dimer to form a complex termed ISGF3 transcription factor, that enters the nucleus. ISGF3 binds to the IFN stimulated response element (ISRE) to activate the transcription of interferon stimulated genes, which drive the cell in an antiviral state.</text>
</comment>
<comment type="subunit">
    <text evidence="4">Interacts with STAT2 in the cytoplasm. Forms the interferon-stimulated gene factor 3 complex (ISGF3) with the heterodimer STAT1:STAT2; upon stimulation.</text>
</comment>
<comment type="interaction">
    <interactant intactId="EBI-646653">
        <id>Q61179</id>
    </interactant>
    <interactant intactId="EBI-646643">
        <id>Q9QXJ2</id>
        <label>Stat2</label>
    </interactant>
    <organismsDiffer>false</organismsDiffer>
    <experiments>10</experiments>
</comment>
<comment type="subcellular location">
    <subcellularLocation>
        <location>Nucleus</location>
    </subcellularLocation>
</comment>
<comment type="induction">
    <text>By IFN-alpha and IFN-beta. Upon stimulation the regulatory phosphorylated alpha and beta subunits assemble with the gamma subunit and translocate from the cytoplasm to the nucleus.</text>
</comment>
<comment type="similarity">
    <text evidence="2">Belongs to the IRF family.</text>
</comment>
<dbReference type="EMBL" id="U51992">
    <property type="protein sequence ID" value="AAC52494.1"/>
    <property type="molecule type" value="mRNA"/>
</dbReference>
<dbReference type="EMBL" id="BC005435">
    <property type="protein sequence ID" value="AAH05435.1"/>
    <property type="molecule type" value="mRNA"/>
</dbReference>
<dbReference type="EMBL" id="BC012968">
    <property type="protein sequence ID" value="AAH12968.1"/>
    <property type="molecule type" value="mRNA"/>
</dbReference>
<dbReference type="CCDS" id="CCDS27119.1"/>
<dbReference type="PIR" id="JC4592">
    <property type="entry name" value="JC4592"/>
</dbReference>
<dbReference type="RefSeq" id="NP_001152889.1">
    <property type="nucleotide sequence ID" value="NM_001159417.1"/>
</dbReference>
<dbReference type="RefSeq" id="NP_001152890.1">
    <property type="nucleotide sequence ID" value="NM_001159418.1"/>
</dbReference>
<dbReference type="RefSeq" id="NP_032420.1">
    <property type="nucleotide sequence ID" value="NM_008394.3"/>
</dbReference>
<dbReference type="PDB" id="5OEM">
    <property type="method" value="X-ray"/>
    <property type="resolution" value="1.90 A"/>
    <property type="chains" value="A=197-385"/>
</dbReference>
<dbReference type="PDB" id="5OEN">
    <property type="method" value="X-ray"/>
    <property type="resolution" value="2.92 A"/>
    <property type="chains" value="A=206-376"/>
</dbReference>
<dbReference type="PDBsum" id="5OEM"/>
<dbReference type="PDBsum" id="5OEN"/>
<dbReference type="SMR" id="Q61179"/>
<dbReference type="BioGRID" id="200811">
    <property type="interactions" value="9"/>
</dbReference>
<dbReference type="FunCoup" id="Q61179">
    <property type="interactions" value="873"/>
</dbReference>
<dbReference type="IntAct" id="Q61179">
    <property type="interactions" value="8"/>
</dbReference>
<dbReference type="STRING" id="10090.ENSMUSP00000120525"/>
<dbReference type="iPTMnet" id="Q61179"/>
<dbReference type="PhosphoSitePlus" id="Q61179"/>
<dbReference type="jPOST" id="Q61179"/>
<dbReference type="PaxDb" id="10090-ENSMUSP00000120525"/>
<dbReference type="ProteomicsDB" id="269506"/>
<dbReference type="Antibodypedia" id="663">
    <property type="antibodies" value="289 antibodies from 34 providers"/>
</dbReference>
<dbReference type="DNASU" id="16391"/>
<dbReference type="Ensembl" id="ENSMUST00000130697.8">
    <property type="protein sequence ID" value="ENSMUSP00000120359.2"/>
    <property type="gene ID" value="ENSMUSG00000002325.16"/>
</dbReference>
<dbReference type="GeneID" id="16391"/>
<dbReference type="KEGG" id="mmu:16391"/>
<dbReference type="UCSC" id="uc007tzl.2">
    <property type="organism name" value="mouse"/>
</dbReference>
<dbReference type="AGR" id="MGI:107587"/>
<dbReference type="CTD" id="10379"/>
<dbReference type="MGI" id="MGI:107587">
    <property type="gene designation" value="Irf9"/>
</dbReference>
<dbReference type="VEuPathDB" id="HostDB:ENSMUSG00000002325"/>
<dbReference type="eggNOG" id="ENOG502RR4E">
    <property type="taxonomic scope" value="Eukaryota"/>
</dbReference>
<dbReference type="GeneTree" id="ENSGT00940000162115"/>
<dbReference type="HOGENOM" id="CLU_031544_1_2_1"/>
<dbReference type="InParanoid" id="Q61179"/>
<dbReference type="OrthoDB" id="5958224at2759"/>
<dbReference type="PhylomeDB" id="Q61179"/>
<dbReference type="Reactome" id="R-MMU-909733">
    <property type="pathway name" value="Interferon alpha/beta signaling"/>
</dbReference>
<dbReference type="BioGRID-ORCS" id="16391">
    <property type="hits" value="9 hits in 81 CRISPR screens"/>
</dbReference>
<dbReference type="ChiTaRS" id="Irf9">
    <property type="organism name" value="mouse"/>
</dbReference>
<dbReference type="PRO" id="PR:Q61179"/>
<dbReference type="Proteomes" id="UP000000589">
    <property type="component" value="Chromosome 14"/>
</dbReference>
<dbReference type="RNAct" id="Q61179">
    <property type="molecule type" value="protein"/>
</dbReference>
<dbReference type="Bgee" id="ENSMUSG00000002325">
    <property type="expression patterns" value="Expressed in granulocyte and 251 other cell types or tissues"/>
</dbReference>
<dbReference type="ExpressionAtlas" id="Q61179">
    <property type="expression patterns" value="baseline and differential"/>
</dbReference>
<dbReference type="GO" id="GO:0005634">
    <property type="term" value="C:nucleus"/>
    <property type="evidence" value="ECO:0007669"/>
    <property type="project" value="UniProtKB-SubCell"/>
</dbReference>
<dbReference type="GO" id="GO:0003700">
    <property type="term" value="F:DNA-binding transcription factor activity"/>
    <property type="evidence" value="ECO:0007669"/>
    <property type="project" value="InterPro"/>
</dbReference>
<dbReference type="GO" id="GO:0000976">
    <property type="term" value="F:transcription cis-regulatory region binding"/>
    <property type="evidence" value="ECO:0007669"/>
    <property type="project" value="InterPro"/>
</dbReference>
<dbReference type="GO" id="GO:0045893">
    <property type="term" value="P:positive regulation of DNA-templated transcription"/>
    <property type="evidence" value="ECO:0007669"/>
    <property type="project" value="UniProtKB-ARBA"/>
</dbReference>
<dbReference type="GO" id="GO:0006357">
    <property type="term" value="P:regulation of transcription by RNA polymerase II"/>
    <property type="evidence" value="ECO:0007669"/>
    <property type="project" value="UniProtKB-ARBA"/>
</dbReference>
<dbReference type="CDD" id="cd00103">
    <property type="entry name" value="IRF"/>
    <property type="match status" value="1"/>
</dbReference>
<dbReference type="FunFam" id="1.10.10.10:FF:000041">
    <property type="entry name" value="Interferon regulatory factor 4"/>
    <property type="match status" value="1"/>
</dbReference>
<dbReference type="FunFam" id="2.60.200.10:FF:000009">
    <property type="entry name" value="interferon regulatory factor 9 isoform X1"/>
    <property type="match status" value="1"/>
</dbReference>
<dbReference type="Gene3D" id="2.60.200.10">
    <property type="match status" value="1"/>
</dbReference>
<dbReference type="Gene3D" id="1.10.10.10">
    <property type="entry name" value="Winged helix-like DNA-binding domain superfamily/Winged helix DNA-binding domain"/>
    <property type="match status" value="1"/>
</dbReference>
<dbReference type="InterPro" id="IPR019817">
    <property type="entry name" value="Interferon_reg_fac_CS"/>
</dbReference>
<dbReference type="InterPro" id="IPR001346">
    <property type="entry name" value="Interferon_reg_fact_DNA-bd_dom"/>
</dbReference>
<dbReference type="InterPro" id="IPR019471">
    <property type="entry name" value="Interferon_reg_factor-3"/>
</dbReference>
<dbReference type="InterPro" id="IPR017855">
    <property type="entry name" value="SMAD-like_dom_sf"/>
</dbReference>
<dbReference type="InterPro" id="IPR008984">
    <property type="entry name" value="SMAD_FHA_dom_sf"/>
</dbReference>
<dbReference type="InterPro" id="IPR036388">
    <property type="entry name" value="WH-like_DNA-bd_sf"/>
</dbReference>
<dbReference type="InterPro" id="IPR036390">
    <property type="entry name" value="WH_DNA-bd_sf"/>
</dbReference>
<dbReference type="PANTHER" id="PTHR11949">
    <property type="entry name" value="INTERFERON REGULATORY FACTOR"/>
    <property type="match status" value="1"/>
</dbReference>
<dbReference type="PANTHER" id="PTHR11949:SF26">
    <property type="entry name" value="INTERFERON REGULATORY FACTOR 9"/>
    <property type="match status" value="1"/>
</dbReference>
<dbReference type="Pfam" id="PF00605">
    <property type="entry name" value="IRF"/>
    <property type="match status" value="1"/>
</dbReference>
<dbReference type="Pfam" id="PF10401">
    <property type="entry name" value="IRF-3"/>
    <property type="match status" value="1"/>
</dbReference>
<dbReference type="PRINTS" id="PR00267">
    <property type="entry name" value="INTFRNREGFCT"/>
</dbReference>
<dbReference type="SMART" id="SM00348">
    <property type="entry name" value="IRF"/>
    <property type="match status" value="1"/>
</dbReference>
<dbReference type="SMART" id="SM01243">
    <property type="entry name" value="IRF-3"/>
    <property type="match status" value="1"/>
</dbReference>
<dbReference type="SUPFAM" id="SSF49879">
    <property type="entry name" value="SMAD/FHA domain"/>
    <property type="match status" value="1"/>
</dbReference>
<dbReference type="SUPFAM" id="SSF46785">
    <property type="entry name" value="Winged helix' DNA-binding domain"/>
    <property type="match status" value="1"/>
</dbReference>
<dbReference type="PROSITE" id="PS00601">
    <property type="entry name" value="IRF_1"/>
    <property type="match status" value="1"/>
</dbReference>
<dbReference type="PROSITE" id="PS51507">
    <property type="entry name" value="IRF_2"/>
    <property type="match status" value="1"/>
</dbReference>